<organism>
    <name type="scientific">Zea mays</name>
    <name type="common">Maize</name>
    <dbReference type="NCBI Taxonomy" id="4577"/>
    <lineage>
        <taxon>Eukaryota</taxon>
        <taxon>Viridiplantae</taxon>
        <taxon>Streptophyta</taxon>
        <taxon>Embryophyta</taxon>
        <taxon>Tracheophyta</taxon>
        <taxon>Spermatophyta</taxon>
        <taxon>Magnoliopsida</taxon>
        <taxon>Liliopsida</taxon>
        <taxon>Poales</taxon>
        <taxon>Poaceae</taxon>
        <taxon>PACMAD clade</taxon>
        <taxon>Panicoideae</taxon>
        <taxon>Andropogonodae</taxon>
        <taxon>Andropogoneae</taxon>
        <taxon>Tripsacinae</taxon>
        <taxon>Zea</taxon>
    </lineage>
</organism>
<accession>P06671</accession>
<evidence type="ECO:0000250" key="1"/>
<evidence type="ECO:0000250" key="2">
    <source>
        <dbReference type="UniProtKB" id="P07371"/>
    </source>
</evidence>
<evidence type="ECO:0000250" key="3">
    <source>
        <dbReference type="UniProtKB" id="P12333"/>
    </source>
</evidence>
<evidence type="ECO:0000255" key="4"/>
<evidence type="ECO:0000305" key="5"/>
<reference key="1">
    <citation type="journal article" date="1987" name="Nucleic Acids Res.">
        <title>Nucleotide sequence of cDNA encoding the light-harvesting chlorophyll a/b binding protein from maize.</title>
        <authorList>
            <person name="Matsuoka M."/>
            <person name="Kano-Murakami Y."/>
            <person name="Yamamoto N."/>
        </authorList>
    </citation>
    <scope>NUCLEOTIDE SEQUENCE [MRNA]</scope>
    <source>
        <strain>cv. Golden cross Bantam</strain>
    </source>
</reference>
<feature type="transit peptide" description="Chloroplast" evidence="5">
    <location>
        <begin position="1"/>
        <end position="32"/>
    </location>
</feature>
<feature type="chain" id="PRO_0000003671" description="Chlorophyll a-b binding protein, chloroplastic">
    <location>
        <begin position="33"/>
        <end position="265"/>
    </location>
</feature>
<feature type="transmembrane region" description="Helical" evidence="4">
    <location>
        <begin position="99"/>
        <end position="119"/>
    </location>
</feature>
<feature type="transmembrane region" description="Helical" evidence="4">
    <location>
        <begin position="151"/>
        <end position="171"/>
    </location>
</feature>
<feature type="transmembrane region" description="Helical" evidence="4">
    <location>
        <begin position="219"/>
        <end position="239"/>
    </location>
</feature>
<feature type="binding site" description="axial binding residue" evidence="3">
    <location>
        <position position="57"/>
    </location>
    <ligand>
        <name>chlorophyll b</name>
        <dbReference type="ChEBI" id="CHEBI:61721"/>
        <label>1</label>
    </ligand>
    <ligandPart>
        <name>Mg</name>
        <dbReference type="ChEBI" id="CHEBI:25107"/>
    </ligandPart>
</feature>
<feature type="binding site" evidence="1">
    <location>
        <position position="79"/>
    </location>
    <ligand>
        <name>chlorophyll a</name>
        <dbReference type="ChEBI" id="CHEBI:58416"/>
        <label>1</label>
    </ligand>
</feature>
<feature type="binding site" evidence="1">
    <location>
        <position position="85"/>
    </location>
    <ligand>
        <name>chlorophyll a</name>
        <dbReference type="ChEBI" id="CHEBI:58416"/>
        <label>1</label>
    </ligand>
</feature>
<feature type="binding site" description="axial binding residue" evidence="3">
    <location>
        <position position="98"/>
    </location>
    <ligand>
        <name>chlorophyll a</name>
        <dbReference type="ChEBI" id="CHEBI:58416"/>
        <label>1</label>
    </ligand>
    <ligandPart>
        <name>Mg</name>
        <dbReference type="ChEBI" id="CHEBI:25107"/>
    </ligandPart>
</feature>
<feature type="binding site" description="axial binding residue" evidence="3">
    <location>
        <position position="101"/>
    </location>
    <ligand>
        <name>chlorophyll a</name>
        <dbReference type="ChEBI" id="CHEBI:58416"/>
        <label>2</label>
    </ligand>
    <ligandPart>
        <name>Mg</name>
        <dbReference type="ChEBI" id="CHEBI:25107"/>
    </ligandPart>
</feature>
<feature type="binding site" evidence="1">
    <location>
        <position position="103"/>
    </location>
    <ligand>
        <name>chlorophyll b</name>
        <dbReference type="ChEBI" id="CHEBI:61721"/>
        <label>2</label>
    </ligand>
</feature>
<feature type="binding site" evidence="1">
    <location>
        <position position="136"/>
    </location>
    <ligand>
        <name>chlorophyll a</name>
        <dbReference type="ChEBI" id="CHEBI:58416"/>
        <label>3</label>
    </ligand>
</feature>
<feature type="binding site" evidence="1">
    <location>
        <position position="146"/>
    </location>
    <ligand>
        <name>chlorophyll a</name>
        <dbReference type="ChEBI" id="CHEBI:58416"/>
        <label>3</label>
    </ligand>
</feature>
<feature type="binding site" description="axial binding residue" evidence="1">
    <location>
        <position position="152"/>
    </location>
    <ligand>
        <name>chlorophyll b</name>
        <dbReference type="ChEBI" id="CHEBI:61721"/>
        <label>2</label>
    </ligand>
    <ligandPart>
        <name>Mg</name>
        <dbReference type="ChEBI" id="CHEBI:25107"/>
    </ligandPart>
</feature>
<feature type="binding site" evidence="1">
    <location>
        <position position="156"/>
    </location>
    <ligand>
        <name>chlorophyll b</name>
        <dbReference type="ChEBI" id="CHEBI:61721"/>
        <label>3</label>
    </ligand>
</feature>
<feature type="binding site" evidence="1">
    <location>
        <position position="164"/>
    </location>
    <ligand>
        <name>chlorophyll b</name>
        <dbReference type="ChEBI" id="CHEBI:61721"/>
        <label>4</label>
    </ligand>
</feature>
<feature type="binding site" evidence="2">
    <location>
        <position position="164"/>
    </location>
    <ligand>
        <name>chlorophyll b</name>
        <dbReference type="ChEBI" id="CHEBI:61721"/>
        <label>5</label>
    </ligand>
</feature>
<feature type="binding site" description="axial binding residue" evidence="3">
    <location>
        <position position="172"/>
    </location>
    <ligand>
        <name>chlorophyll b</name>
        <dbReference type="ChEBI" id="CHEBI:61721"/>
        <label>3</label>
    </ligand>
    <ligandPart>
        <name>Mg</name>
        <dbReference type="ChEBI" id="CHEBI:25107"/>
    </ligandPart>
</feature>
<feature type="binding site" evidence="1">
    <location>
        <position position="175"/>
    </location>
    <ligand>
        <name>chlorophyll b</name>
        <dbReference type="ChEBI" id="CHEBI:61721"/>
        <label>4</label>
    </ligand>
</feature>
<feature type="binding site" evidence="1">
    <location>
        <position position="181"/>
    </location>
    <ligand>
        <name>chlorophyll b</name>
        <dbReference type="ChEBI" id="CHEBI:61721"/>
        <label>2</label>
    </ligand>
</feature>
<feature type="binding site" evidence="1">
    <location>
        <position position="212"/>
    </location>
    <ligand>
        <name>chlorophyll a</name>
        <dbReference type="ChEBI" id="CHEBI:58416"/>
        <label>5</label>
    </ligand>
</feature>
<feature type="binding site" description="axial binding residue" evidence="3">
    <location>
        <position position="213"/>
    </location>
    <ligand>
        <name>chlorophyll a</name>
        <dbReference type="ChEBI" id="CHEBI:58416"/>
        <label>3</label>
    </ligand>
    <ligandPart>
        <name>Mg</name>
        <dbReference type="ChEBI" id="CHEBI:25107"/>
    </ligandPart>
</feature>
<feature type="binding site" evidence="1">
    <location>
        <position position="218"/>
    </location>
    <ligand>
        <name>chlorophyll a</name>
        <dbReference type="ChEBI" id="CHEBI:58416"/>
        <label>1</label>
    </ligand>
</feature>
<feature type="binding site" description="axial binding residue" evidence="3">
    <location>
        <position position="230"/>
    </location>
    <ligand>
        <name>chlorophyll a</name>
        <dbReference type="ChEBI" id="CHEBI:58416"/>
        <label>5</label>
    </ligand>
    <ligandPart>
        <name>Mg</name>
        <dbReference type="ChEBI" id="CHEBI:25107"/>
    </ligandPart>
</feature>
<feature type="binding site" description="axial binding residue" evidence="3">
    <location>
        <position position="245"/>
    </location>
    <ligand>
        <name>chlorophyll a</name>
        <dbReference type="ChEBI" id="CHEBI:58416"/>
        <label>6</label>
    </ligand>
    <ligandPart>
        <name>Mg</name>
        <dbReference type="ChEBI" id="CHEBI:25107"/>
    </ligandPart>
</feature>
<feature type="binding site" evidence="1">
    <location>
        <position position="254"/>
    </location>
    <ligand>
        <name>chlorophyll a</name>
        <dbReference type="ChEBI" id="CHEBI:58416"/>
        <label>6</label>
    </ligand>
</feature>
<feature type="binding site" evidence="1">
    <location>
        <position position="261"/>
    </location>
    <ligand>
        <name>chlorophyll b</name>
        <dbReference type="ChEBI" id="CHEBI:61721"/>
        <label>5</label>
    </ligand>
</feature>
<feature type="modified residue" description="N2-acetylarginine" evidence="1">
    <location>
        <position position="33"/>
    </location>
</feature>
<feature type="modified residue" description="Phosphothreonine" evidence="1">
    <location>
        <position position="35"/>
    </location>
</feature>
<sequence length="265" mass="27995">MASSTMALSSTAFAGKAVNVPSSSFGEARVTMRKTAAKAKPAAASGSPWYGPDRVLYLGPLSGEPPSYLTGEFPGDYGWDTAGLSADPETFAKNRELEVIHCRWAMLGALGCVFPELLARNGVKFGEAVWFKAGSQIFSEGGLDYLGNPSLIHAQSILAIWACQVVLMGAVEGYRIAGGPLGEVVDPLYPGGSFDPLGLADDPEAFGELKVKELKKGRLAMLSMFGFFVQAIVTGKGPLENLADHIADPVNNNAWAYATNFVPGK</sequence>
<keyword id="KW-0007">Acetylation</keyword>
<keyword id="KW-0148">Chlorophyll</keyword>
<keyword id="KW-0150">Chloroplast</keyword>
<keyword id="KW-0157">Chromophore</keyword>
<keyword id="KW-0460">Magnesium</keyword>
<keyword id="KW-0472">Membrane</keyword>
<keyword id="KW-0479">Metal-binding</keyword>
<keyword id="KW-0597">Phosphoprotein</keyword>
<keyword id="KW-0602">Photosynthesis</keyword>
<keyword id="KW-0603">Photosystem I</keyword>
<keyword id="KW-0604">Photosystem II</keyword>
<keyword id="KW-0934">Plastid</keyword>
<keyword id="KW-1185">Reference proteome</keyword>
<keyword id="KW-0793">Thylakoid</keyword>
<keyword id="KW-0809">Transit peptide</keyword>
<keyword id="KW-0812">Transmembrane</keyword>
<keyword id="KW-1133">Transmembrane helix</keyword>
<dbReference type="EMBL" id="Y00379">
    <property type="protein sequence ID" value="CAA68451.1"/>
    <property type="molecule type" value="mRNA"/>
</dbReference>
<dbReference type="PIR" id="A29119">
    <property type="entry name" value="A29119"/>
</dbReference>
<dbReference type="SMR" id="P06671"/>
<dbReference type="FunCoup" id="P06671">
    <property type="interactions" value="971"/>
</dbReference>
<dbReference type="STRING" id="4577.P06671"/>
<dbReference type="MaizeGDB" id="61648"/>
<dbReference type="InParanoid" id="P06671"/>
<dbReference type="Proteomes" id="UP000007305">
    <property type="component" value="Unplaced"/>
</dbReference>
<dbReference type="ExpressionAtlas" id="P06671">
    <property type="expression patterns" value="differential"/>
</dbReference>
<dbReference type="GO" id="GO:0009535">
    <property type="term" value="C:chloroplast thylakoid membrane"/>
    <property type="evidence" value="ECO:0000318"/>
    <property type="project" value="GO_Central"/>
</dbReference>
<dbReference type="GO" id="GO:0009522">
    <property type="term" value="C:photosystem I"/>
    <property type="evidence" value="ECO:0007669"/>
    <property type="project" value="UniProtKB-KW"/>
</dbReference>
<dbReference type="GO" id="GO:0009523">
    <property type="term" value="C:photosystem II"/>
    <property type="evidence" value="ECO:0007669"/>
    <property type="project" value="UniProtKB-KW"/>
</dbReference>
<dbReference type="GO" id="GO:0016168">
    <property type="term" value="F:chlorophyll binding"/>
    <property type="evidence" value="ECO:0007669"/>
    <property type="project" value="UniProtKB-KW"/>
</dbReference>
<dbReference type="GO" id="GO:0046872">
    <property type="term" value="F:metal ion binding"/>
    <property type="evidence" value="ECO:0007669"/>
    <property type="project" value="UniProtKB-KW"/>
</dbReference>
<dbReference type="GO" id="GO:0009768">
    <property type="term" value="P:photosynthesis, light harvesting in photosystem I"/>
    <property type="evidence" value="ECO:0000318"/>
    <property type="project" value="GO_Central"/>
</dbReference>
<dbReference type="GO" id="GO:0009416">
    <property type="term" value="P:response to light stimulus"/>
    <property type="evidence" value="ECO:0000318"/>
    <property type="project" value="GO_Central"/>
</dbReference>
<dbReference type="FunFam" id="1.10.3460.10:FF:000001">
    <property type="entry name" value="Chlorophyll a-b binding protein, chloroplastic"/>
    <property type="match status" value="1"/>
</dbReference>
<dbReference type="Gene3D" id="1.10.3460.10">
    <property type="entry name" value="Chlorophyll a/b binding protein domain"/>
    <property type="match status" value="1"/>
</dbReference>
<dbReference type="InterPro" id="IPR001344">
    <property type="entry name" value="Chloro_AB-bd_pln"/>
</dbReference>
<dbReference type="InterPro" id="IPR022796">
    <property type="entry name" value="Chloroa_b-bind"/>
</dbReference>
<dbReference type="PANTHER" id="PTHR21649">
    <property type="entry name" value="CHLOROPHYLL A/B BINDING PROTEIN"/>
    <property type="match status" value="1"/>
</dbReference>
<dbReference type="Pfam" id="PF00504">
    <property type="entry name" value="Chloroa_b-bind"/>
    <property type="match status" value="1"/>
</dbReference>
<dbReference type="SUPFAM" id="SSF103511">
    <property type="entry name" value="Chlorophyll a-b binding protein"/>
    <property type="match status" value="1"/>
</dbReference>
<comment type="function">
    <text>The light-harvesting complex (LHC) functions as a light receptor, it captures and delivers excitation energy to photosystems with which it is closely associated.</text>
</comment>
<comment type="cofactor">
    <text evidence="1">Binds at least 14 chlorophylls (8 Chl-a and 6 Chl-b) and carotenoids such as lutein and neoxanthin.</text>
</comment>
<comment type="subunit">
    <text>The LHC complex consists of chlorophyll a-b binding proteins.</text>
</comment>
<comment type="subcellular location">
    <subcellularLocation>
        <location>Plastid</location>
        <location>Chloroplast thylakoid membrane</location>
        <topology>Multi-pass membrane protein</topology>
    </subcellularLocation>
</comment>
<comment type="domain">
    <text>The N-terminus of the protein extends into the stroma where it is involved with adhesion of granal membranes and post-translational modifications; both are believed to mediate the distribution of excitation energy between photosystems I and II.</text>
</comment>
<comment type="PTM">
    <text evidence="1">Photoregulated by reversible phosphorylation of its threonine residues.</text>
</comment>
<comment type="similarity">
    <text evidence="5">Belongs to the light-harvesting chlorophyll a/b-binding (LHC) protein family.</text>
</comment>
<name>CB22_MAIZE</name>
<protein>
    <recommendedName>
        <fullName>Chlorophyll a-b binding protein, chloroplastic</fullName>
    </recommendedName>
    <alternativeName>
        <fullName>LHCII type I CAB</fullName>
        <shortName>LHCP</shortName>
    </alternativeName>
</protein>
<proteinExistence type="evidence at transcript level"/>